<keyword id="KW-0235">DNA replication</keyword>
<keyword id="KW-0240">DNA-directed RNA polymerase</keyword>
<keyword id="KW-0271">Exosome</keyword>
<keyword id="KW-0460">Magnesium</keyword>
<keyword id="KW-0479">Metal-binding</keyword>
<keyword id="KW-0548">Nucleotidyltransferase</keyword>
<keyword id="KW-0639">Primosome</keyword>
<keyword id="KW-1185">Reference proteome</keyword>
<keyword id="KW-0804">Transcription</keyword>
<keyword id="KW-0808">Transferase</keyword>
<organism>
    <name type="scientific">Pyrococcus furiosus (strain ATCC 43587 / DSM 3638 / JCM 8422 / Vc1)</name>
    <dbReference type="NCBI Taxonomy" id="186497"/>
    <lineage>
        <taxon>Archaea</taxon>
        <taxon>Methanobacteriati</taxon>
        <taxon>Methanobacteriota</taxon>
        <taxon>Thermococci</taxon>
        <taxon>Thermococcales</taxon>
        <taxon>Thermococcaceae</taxon>
        <taxon>Pyrococcus</taxon>
    </lineage>
</organism>
<sequence>MKRKKTVIHQLISEKQRFEKAKEGGNMAAKDDFGTTKYIIHAEFEANGVVERPDVVGAIFGQTEGLLGDDLDLRELQKTGRIGRIKVEVHTKAGKTYGTILVPSSLDRVETAIIAAALETIDRVGPCEAKIRVIKIEDVRATKRKYIIERAKEILETLMEEEIPETQELVEEVRKAVREMELIEYGPEKLPAGPHVPFSDSIIVVEGRADVLNLLRHGIKNAIAVEGTSIPETIIKLSKERIVTAFTDGDRGGELILKELLQVADIDYVARAPEGKEVEELTKKEIIKALRSKVPADQLLTIVQQRKELFDKLGRERRRGGARKQEYTKKGSLNPQPQVHPNEKIVKPLKVLKPDYKEFEEFIEKVKNDSIALLIDENKNIIKEVPIRDMLSAIESSESIYAVVFNGVITQRLIDIVSEKGAKYLIGARKANVVRRPITLKIITFAE</sequence>
<reference key="1">
    <citation type="journal article" date="1999" name="Genetics">
        <title>Divergence of the hyperthermophilic archaea Pyrococcus furiosus and P. horikoshii inferred from complete genomic sequences.</title>
        <authorList>
            <person name="Maeder D.L."/>
            <person name="Weiss R.B."/>
            <person name="Dunn D.M."/>
            <person name="Cherry J.L."/>
            <person name="Gonzalez J.M."/>
            <person name="DiRuggiero J."/>
            <person name="Robb F.T."/>
        </authorList>
    </citation>
    <scope>NUCLEOTIDE SEQUENCE [LARGE SCALE GENOMIC DNA]</scope>
    <source>
        <strain>ATCC 43587 / DSM 3638 / JCM 8422 / Vc1</strain>
    </source>
</reference>
<dbReference type="EC" id="2.7.7.101" evidence="1"/>
<dbReference type="EMBL" id="AE009950">
    <property type="protein sequence ID" value="AAL81849.1"/>
    <property type="molecule type" value="Genomic_DNA"/>
</dbReference>
<dbReference type="RefSeq" id="WP_011012871.1">
    <property type="nucleotide sequence ID" value="NC_003413.1"/>
</dbReference>
<dbReference type="SMR" id="Q8U076"/>
<dbReference type="STRING" id="186497.PF1725"/>
<dbReference type="PaxDb" id="186497-PF1725"/>
<dbReference type="GeneID" id="1469602"/>
<dbReference type="KEGG" id="pfu:PF1725"/>
<dbReference type="PATRIC" id="fig|186497.12.peg.1793"/>
<dbReference type="eggNOG" id="arCOG04281">
    <property type="taxonomic scope" value="Archaea"/>
</dbReference>
<dbReference type="HOGENOM" id="CLU_034626_0_0_2"/>
<dbReference type="OrthoDB" id="8643at2157"/>
<dbReference type="PhylomeDB" id="Q8U076"/>
<dbReference type="Proteomes" id="UP000001013">
    <property type="component" value="Chromosome"/>
</dbReference>
<dbReference type="GO" id="GO:0005737">
    <property type="term" value="C:cytoplasm"/>
    <property type="evidence" value="ECO:0007669"/>
    <property type="project" value="TreeGrafter"/>
</dbReference>
<dbReference type="GO" id="GO:0000428">
    <property type="term" value="C:DNA-directed RNA polymerase complex"/>
    <property type="evidence" value="ECO:0007669"/>
    <property type="project" value="UniProtKB-KW"/>
</dbReference>
<dbReference type="GO" id="GO:0000178">
    <property type="term" value="C:exosome (RNase complex)"/>
    <property type="evidence" value="ECO:0007669"/>
    <property type="project" value="UniProtKB-KW"/>
</dbReference>
<dbReference type="GO" id="GO:1990077">
    <property type="term" value="C:primosome complex"/>
    <property type="evidence" value="ECO:0007669"/>
    <property type="project" value="UniProtKB-KW"/>
</dbReference>
<dbReference type="GO" id="GO:0003899">
    <property type="term" value="F:DNA-directed RNA polymerase activity"/>
    <property type="evidence" value="ECO:0007669"/>
    <property type="project" value="InterPro"/>
</dbReference>
<dbReference type="GO" id="GO:0046872">
    <property type="term" value="F:metal ion binding"/>
    <property type="evidence" value="ECO:0007669"/>
    <property type="project" value="UniProtKB-KW"/>
</dbReference>
<dbReference type="GO" id="GO:0008143">
    <property type="term" value="F:poly(A) binding"/>
    <property type="evidence" value="ECO:0007669"/>
    <property type="project" value="InterPro"/>
</dbReference>
<dbReference type="GO" id="GO:0006269">
    <property type="term" value="P:DNA replication, synthesis of primer"/>
    <property type="evidence" value="ECO:0007669"/>
    <property type="project" value="UniProtKB-UniRule"/>
</dbReference>
<dbReference type="CDD" id="cd01029">
    <property type="entry name" value="TOPRIM_primases"/>
    <property type="match status" value="1"/>
</dbReference>
<dbReference type="FunFam" id="3.40.1360.10:FF:000010">
    <property type="entry name" value="DNA primase DnaG"/>
    <property type="match status" value="1"/>
</dbReference>
<dbReference type="Gene3D" id="3.40.1360.10">
    <property type="match status" value="1"/>
</dbReference>
<dbReference type="HAMAP" id="MF_00007">
    <property type="entry name" value="DNA_primase_DnaG_arc"/>
    <property type="match status" value="1"/>
</dbReference>
<dbReference type="InterPro" id="IPR050219">
    <property type="entry name" value="DnaG_primase"/>
</dbReference>
<dbReference type="InterPro" id="IPR020607">
    <property type="entry name" value="Primase_DnaG_arc"/>
</dbReference>
<dbReference type="InterPro" id="IPR034154">
    <property type="entry name" value="TOPRIM_DnaG/twinkle"/>
</dbReference>
<dbReference type="InterPro" id="IPR006171">
    <property type="entry name" value="TOPRIM_dom"/>
</dbReference>
<dbReference type="NCBIfam" id="NF003108">
    <property type="entry name" value="PRK04031.1-1"/>
    <property type="match status" value="1"/>
</dbReference>
<dbReference type="PANTHER" id="PTHR30313">
    <property type="entry name" value="DNA PRIMASE"/>
    <property type="match status" value="1"/>
</dbReference>
<dbReference type="PANTHER" id="PTHR30313:SF2">
    <property type="entry name" value="DNA PRIMASE"/>
    <property type="match status" value="1"/>
</dbReference>
<dbReference type="Pfam" id="PF13662">
    <property type="entry name" value="Toprim_4"/>
    <property type="match status" value="1"/>
</dbReference>
<dbReference type="SMART" id="SM00493">
    <property type="entry name" value="TOPRIM"/>
    <property type="match status" value="1"/>
</dbReference>
<dbReference type="SUPFAM" id="SSF56731">
    <property type="entry name" value="DNA primase core"/>
    <property type="match status" value="1"/>
</dbReference>
<dbReference type="PROSITE" id="PS50880">
    <property type="entry name" value="TOPRIM"/>
    <property type="match status" value="1"/>
</dbReference>
<evidence type="ECO:0000255" key="1">
    <source>
        <dbReference type="HAMAP-Rule" id="MF_00007"/>
    </source>
</evidence>
<evidence type="ECO:0000256" key="2">
    <source>
        <dbReference type="SAM" id="MobiDB-lite"/>
    </source>
</evidence>
<comment type="function">
    <text evidence="1">RNA polymerase that catalyzes the synthesis of short RNA molecules used as primers for DNA polymerase during DNA replication. Also part of the exosome, which is a complex involved in RNA degradation. Acts as a poly(A)-binding protein that enhances the interaction between heteromeric, adenine-rich transcripts and the exosome.</text>
</comment>
<comment type="catalytic activity">
    <reaction evidence="1">
        <text>ssDNA + n NTP = ssDNA/pppN(pN)n-1 hybrid + (n-1) diphosphate.</text>
        <dbReference type="EC" id="2.7.7.101"/>
    </reaction>
</comment>
<comment type="cofactor">
    <cofactor evidence="1">
        <name>Mg(2+)</name>
        <dbReference type="ChEBI" id="CHEBI:18420"/>
    </cofactor>
    <text evidence="1">Binds two Mg(2+) per subunit.</text>
</comment>
<comment type="subunit">
    <text evidence="1">Forms a ternary complex with MCM helicase and DNA. Component of the archaeal exosome complex.</text>
</comment>
<comment type="similarity">
    <text evidence="1">Belongs to the archaeal DnaG primase family.</text>
</comment>
<feature type="chain" id="PRO_0000144129" description="DNA primase DnaG">
    <location>
        <begin position="1"/>
        <end position="447"/>
    </location>
</feature>
<feature type="domain" description="Toprim" evidence="1">
    <location>
        <begin position="200"/>
        <end position="274"/>
    </location>
</feature>
<feature type="region of interest" description="Disordered" evidence="2">
    <location>
        <begin position="316"/>
        <end position="339"/>
    </location>
</feature>
<feature type="binding site" evidence="1">
    <location>
        <position position="206"/>
    </location>
    <ligand>
        <name>Mg(2+)</name>
        <dbReference type="ChEBI" id="CHEBI:18420"/>
        <label>1</label>
        <note>catalytic</note>
    </ligand>
</feature>
<feature type="binding site" evidence="1">
    <location>
        <position position="248"/>
    </location>
    <ligand>
        <name>Mg(2+)</name>
        <dbReference type="ChEBI" id="CHEBI:18420"/>
        <label>1</label>
        <note>catalytic</note>
    </ligand>
</feature>
<feature type="binding site" evidence="1">
    <location>
        <position position="248"/>
    </location>
    <ligand>
        <name>Mg(2+)</name>
        <dbReference type="ChEBI" id="CHEBI:18420"/>
        <label>2</label>
    </ligand>
</feature>
<feature type="binding site" evidence="1">
    <location>
        <position position="250"/>
    </location>
    <ligand>
        <name>Mg(2+)</name>
        <dbReference type="ChEBI" id="CHEBI:18420"/>
        <label>2</label>
    </ligand>
</feature>
<accession>Q8U076</accession>
<protein>
    <recommendedName>
        <fullName evidence="1">DNA primase DnaG</fullName>
        <ecNumber evidence="1">2.7.7.101</ecNumber>
    </recommendedName>
</protein>
<proteinExistence type="inferred from homology"/>
<name>DNAG_PYRFU</name>
<gene>
    <name evidence="1" type="primary">dnaG</name>
    <name type="ordered locus">PF1725</name>
</gene>